<organism>
    <name type="scientific">Aspergillus rugulosus</name>
    <name type="common">Emericella rugulosa</name>
    <dbReference type="NCBI Taxonomy" id="41736"/>
    <lineage>
        <taxon>Eukaryota</taxon>
        <taxon>Fungi</taxon>
        <taxon>Dikarya</taxon>
        <taxon>Ascomycota</taxon>
        <taxon>Pezizomycotina</taxon>
        <taxon>Eurotiomycetes</taxon>
        <taxon>Eurotiomycetidae</taxon>
        <taxon>Eurotiales</taxon>
        <taxon>Aspergillaceae</taxon>
        <taxon>Aspergillus</taxon>
        <taxon>Aspergillus subgen. Nidulantes</taxon>
    </lineage>
</organism>
<keyword id="KW-0223">Dioxygenase</keyword>
<keyword id="KW-0408">Iron</keyword>
<keyword id="KW-0479">Metal-binding</keyword>
<keyword id="KW-0560">Oxidoreductase</keyword>
<evidence type="ECO:0000255" key="1">
    <source>
        <dbReference type="PROSITE-ProRule" id="PRU00805"/>
    </source>
</evidence>
<evidence type="ECO:0000269" key="2">
    <source>
    </source>
</evidence>
<evidence type="ECO:0000269" key="3">
    <source>
    </source>
</evidence>
<evidence type="ECO:0000303" key="4">
    <source>
    </source>
</evidence>
<evidence type="ECO:0000305" key="5"/>
<evidence type="ECO:0000305" key="6">
    <source>
    </source>
</evidence>
<name>HTYE_ASPRU</name>
<proteinExistence type="evidence at protein level"/>
<reference key="1">
    <citation type="journal article" date="2012" name="J. Am. Chem. Soc.">
        <title>Identification and characterization of the echinocandin B biosynthetic gene cluster from Emericella rugulosa NRRL 11440.</title>
        <authorList>
            <person name="Cacho R.A."/>
            <person name="Jiang W."/>
            <person name="Chooi Y.H."/>
            <person name="Walsh C.T."/>
            <person name="Tang Y."/>
        </authorList>
    </citation>
    <scope>NUCLEOTIDE SEQUENCE [GENOMIC DNA]</scope>
    <scope>FUNCTION</scope>
    <scope>PATHWAY</scope>
    <scope>BIOTECHNOLOGY</scope>
    <source>
        <strain>ATCC 58397 / NRRL 11440</strain>
    </source>
</reference>
<reference key="2">
    <citation type="journal article" date="2018" name="Appl. Environ. Microbiol.">
        <title>Cryptic production of trans-3-hydroxyproline in echinocandin B biosynthesis.</title>
        <authorList>
            <person name="Mattay J."/>
            <person name="Houwaart S."/>
            <person name="Huettel W."/>
        </authorList>
    </citation>
    <scope>FUNCTION</scope>
    <scope>PATHWAY</scope>
</reference>
<gene>
    <name evidence="4" type="primary">htyE</name>
</gene>
<accession>K0DZA0</accession>
<sequence length="329" mass="37699">MAITTLDFNQFRSTSADERQIFCADLCETLSVYGFAKIRNTTLSNELIDEIFKYTRSFFALPNDIKAKAKHPNAPNPHRGWSAIGQERVWKISGFEQNKERTDSYNEFRESFDQGAADDQLFPNRWVDEDDLPGFQAFMEGFYKSCDELHAHLLRAISTGLKLPDTLLPSKHRHNTSELRLLHYPPIPCSALRSNMRIGEHSDFGTLTLLLQDSVGGLQVEDQRNPRSFIPVEPEDGYEVVINIGDCLQRWTNRRLCSANHRVMLPEGKDVDSEEVLDDRYSVAYFGKPDRDVLVDTLPECVEVGERVEYGDHLTALQYNQIKLTRTYG</sequence>
<feature type="chain" id="PRO_0000443844" description="2-oxoglutarate-dependent dioxygenase htyE">
    <location>
        <begin position="1"/>
        <end position="329"/>
    </location>
</feature>
<feature type="domain" description="Fe2OG dioxygenase" evidence="1">
    <location>
        <begin position="175"/>
        <end position="289"/>
    </location>
</feature>
<feature type="binding site" evidence="1">
    <location>
        <position position="201"/>
    </location>
    <ligand>
        <name>Fe cation</name>
        <dbReference type="ChEBI" id="CHEBI:24875"/>
    </ligand>
</feature>
<feature type="binding site" evidence="1">
    <location>
        <position position="203"/>
    </location>
    <ligand>
        <name>Fe cation</name>
        <dbReference type="ChEBI" id="CHEBI:24875"/>
    </ligand>
</feature>
<feature type="binding site" evidence="1">
    <location>
        <position position="261"/>
    </location>
    <ligand>
        <name>Fe cation</name>
        <dbReference type="ChEBI" id="CHEBI:24875"/>
    </ligand>
</feature>
<feature type="binding site" evidence="1">
    <location>
        <position position="280"/>
    </location>
    <ligand>
        <name>2-oxoglutarate</name>
        <dbReference type="ChEBI" id="CHEBI:16810"/>
    </ligand>
</feature>
<protein>
    <recommendedName>
        <fullName evidence="4">2-oxoglutarate-dependent dioxygenase htyE</fullName>
        <ecNumber evidence="6">1.14.-.-</ecNumber>
    </recommendedName>
    <alternativeName>
        <fullName evidence="4">L-homotyrosine biosynthetic cluster protein E</fullName>
    </alternativeName>
</protein>
<comment type="function">
    <text evidence="2">2-oxoglutarate-dependent dioxygenase; part of the gene cluster that mediates the de novo generation of L-homotyrosine from acetyl-CoA and 4-hydroxyphenyl-pyruvate (PubMed:22998630). L-homotyrosine is a building block of echinocandin B, a fungal lipidated cyclic hexapeptide that acts as an antifungal agent (PubMed:22998630). L-homotyrosine 4-hydroxyphenyl-pyruvate first undergoes an aldol-type condensation by htyA with the C-2 of acetyl-CoA followed by the release of CoA to form 2-(4-hydroxybenzyl)-malate (PubMed:22998630). This is followed by isomerization of 2-(4-hydroxy-benzyl)-malate to 3-(4-hydroxybenzyl)-malate by htyD (PubMed:22998630). Thereafter, 3-(4-hydroxybenzyl)-malate undergoes decarboxylation and oxidation to form 2-oxo-4-(4-hydroxybenzyl)butanoic acid, coupled to reduction of NAD(+) to NADH by htyC (PubMed:22998630). The product then undergoes transamination catalyzed by htyB to form L-homotyrosine (PubMed:22998630).</text>
</comment>
<comment type="cofactor">
    <cofactor evidence="1">
        <name>Fe(2+)</name>
        <dbReference type="ChEBI" id="CHEBI:29033"/>
    </cofactor>
    <text evidence="1">Binds 1 Fe(2+) ion per subunit.</text>
</comment>
<comment type="pathway">
    <text evidence="3 6">Antifungal biosynthesis.</text>
</comment>
<comment type="biotechnology">
    <text evidence="2">Due to their effectiveness as antifungal agents, echinocandin derivatives can be used for the treatment of human invasive candidiasis (PubMed:22998630).</text>
</comment>
<comment type="similarity">
    <text evidence="5">Belongs to the iron/ascorbate-dependent oxidoreductase family.</text>
</comment>
<dbReference type="EC" id="1.14.-.-" evidence="6"/>
<dbReference type="EMBL" id="JX421685">
    <property type="protein sequence ID" value="AFT91391.1"/>
    <property type="molecule type" value="Genomic_DNA"/>
</dbReference>
<dbReference type="SMR" id="K0DZA0"/>
<dbReference type="GO" id="GO:0051213">
    <property type="term" value="F:dioxygenase activity"/>
    <property type="evidence" value="ECO:0007669"/>
    <property type="project" value="UniProtKB-KW"/>
</dbReference>
<dbReference type="GO" id="GO:0046872">
    <property type="term" value="F:metal ion binding"/>
    <property type="evidence" value="ECO:0007669"/>
    <property type="project" value="UniProtKB-KW"/>
</dbReference>
<dbReference type="GO" id="GO:0044283">
    <property type="term" value="P:small molecule biosynthetic process"/>
    <property type="evidence" value="ECO:0007669"/>
    <property type="project" value="UniProtKB-ARBA"/>
</dbReference>
<dbReference type="Gene3D" id="2.60.120.330">
    <property type="entry name" value="B-lactam Antibiotic, Isopenicillin N Synthase, Chain"/>
    <property type="match status" value="1"/>
</dbReference>
<dbReference type="InterPro" id="IPR026992">
    <property type="entry name" value="DIOX_N"/>
</dbReference>
<dbReference type="InterPro" id="IPR044861">
    <property type="entry name" value="IPNS-like_FE2OG_OXY"/>
</dbReference>
<dbReference type="InterPro" id="IPR027443">
    <property type="entry name" value="IPNS-like_sf"/>
</dbReference>
<dbReference type="InterPro" id="IPR050231">
    <property type="entry name" value="Iron_ascorbate_oxido_reductase"/>
</dbReference>
<dbReference type="InterPro" id="IPR005123">
    <property type="entry name" value="Oxoglu/Fe-dep_dioxygenase_dom"/>
</dbReference>
<dbReference type="PANTHER" id="PTHR47990">
    <property type="entry name" value="2-OXOGLUTARATE (2OG) AND FE(II)-DEPENDENT OXYGENASE SUPERFAMILY PROTEIN-RELATED"/>
    <property type="match status" value="1"/>
</dbReference>
<dbReference type="Pfam" id="PF03171">
    <property type="entry name" value="2OG-FeII_Oxy"/>
    <property type="match status" value="1"/>
</dbReference>
<dbReference type="Pfam" id="PF14226">
    <property type="entry name" value="DIOX_N"/>
    <property type="match status" value="1"/>
</dbReference>
<dbReference type="SUPFAM" id="SSF51197">
    <property type="entry name" value="Clavaminate synthase-like"/>
    <property type="match status" value="1"/>
</dbReference>
<dbReference type="PROSITE" id="PS51471">
    <property type="entry name" value="FE2OG_OXY"/>
    <property type="match status" value="1"/>
</dbReference>